<comment type="function">
    <text evidence="1">Dual-specificity methyltransferase that catalyzes the formation of 5-methyluridine at position 54 (m5U54) in all tRNAs, and that of position 341 (m5U341) in tmRNA (transfer-mRNA).</text>
</comment>
<comment type="catalytic activity">
    <reaction evidence="1">
        <text>uridine(54) in tRNA + S-adenosyl-L-methionine = 5-methyluridine(54) in tRNA + S-adenosyl-L-homocysteine + H(+)</text>
        <dbReference type="Rhea" id="RHEA:42712"/>
        <dbReference type="Rhea" id="RHEA-COMP:10167"/>
        <dbReference type="Rhea" id="RHEA-COMP:10193"/>
        <dbReference type="ChEBI" id="CHEBI:15378"/>
        <dbReference type="ChEBI" id="CHEBI:57856"/>
        <dbReference type="ChEBI" id="CHEBI:59789"/>
        <dbReference type="ChEBI" id="CHEBI:65315"/>
        <dbReference type="ChEBI" id="CHEBI:74447"/>
        <dbReference type="EC" id="2.1.1.35"/>
    </reaction>
</comment>
<comment type="catalytic activity">
    <reaction evidence="1">
        <text>uridine(341) in tmRNA + S-adenosyl-L-methionine = 5-methyluridine(341) in tmRNA + S-adenosyl-L-homocysteine + H(+)</text>
        <dbReference type="Rhea" id="RHEA:43612"/>
        <dbReference type="Rhea" id="RHEA-COMP:10630"/>
        <dbReference type="Rhea" id="RHEA-COMP:10631"/>
        <dbReference type="ChEBI" id="CHEBI:15378"/>
        <dbReference type="ChEBI" id="CHEBI:57856"/>
        <dbReference type="ChEBI" id="CHEBI:59789"/>
        <dbReference type="ChEBI" id="CHEBI:65315"/>
        <dbReference type="ChEBI" id="CHEBI:74447"/>
    </reaction>
</comment>
<comment type="similarity">
    <text evidence="1">Belongs to the class I-like SAM-binding methyltransferase superfamily. RNA M5U methyltransferase family. TrmA subfamily.</text>
</comment>
<accession>B7V1D2</accession>
<protein>
    <recommendedName>
        <fullName evidence="1">tRNA/tmRNA (uracil-C(5))-methyltransferase</fullName>
        <ecNumber evidence="1">2.1.1.-</ecNumber>
        <ecNumber evidence="1">2.1.1.35</ecNumber>
    </recommendedName>
    <alternativeName>
        <fullName evidence="1">tRNA (uracil(54)-C(5))-methyltransferase</fullName>
    </alternativeName>
    <alternativeName>
        <fullName evidence="1">tRNA(m5U54)-methyltransferase</fullName>
        <shortName evidence="1">RUMT</shortName>
    </alternativeName>
    <alternativeName>
        <fullName evidence="1">tmRNA (uracil(341)-C(5))-methyltransferase</fullName>
    </alternativeName>
</protein>
<proteinExistence type="inferred from homology"/>
<name>TRMA_PSEA8</name>
<gene>
    <name evidence="1" type="primary">trmA</name>
    <name type="ordered locus">PLES_51051</name>
</gene>
<feature type="chain" id="PRO_1000198548" description="tRNA/tmRNA (uracil-C(5))-methyltransferase">
    <location>
        <begin position="1"/>
        <end position="363"/>
    </location>
</feature>
<feature type="active site" description="Nucleophile" evidence="1">
    <location>
        <position position="321"/>
    </location>
</feature>
<feature type="active site" description="Proton acceptor" evidence="1">
    <location>
        <position position="355"/>
    </location>
</feature>
<feature type="binding site" evidence="1">
    <location>
        <position position="187"/>
    </location>
    <ligand>
        <name>S-adenosyl-L-methionine</name>
        <dbReference type="ChEBI" id="CHEBI:59789"/>
    </ligand>
</feature>
<feature type="binding site" evidence="1">
    <location>
        <position position="215"/>
    </location>
    <ligand>
        <name>S-adenosyl-L-methionine</name>
        <dbReference type="ChEBI" id="CHEBI:59789"/>
    </ligand>
</feature>
<feature type="binding site" evidence="1">
    <location>
        <position position="220"/>
    </location>
    <ligand>
        <name>S-adenosyl-L-methionine</name>
        <dbReference type="ChEBI" id="CHEBI:59789"/>
    </ligand>
</feature>
<feature type="binding site" evidence="1">
    <location>
        <position position="236"/>
    </location>
    <ligand>
        <name>S-adenosyl-L-methionine</name>
        <dbReference type="ChEBI" id="CHEBI:59789"/>
    </ligand>
</feature>
<feature type="binding site" evidence="1">
    <location>
        <position position="296"/>
    </location>
    <ligand>
        <name>S-adenosyl-L-methionine</name>
        <dbReference type="ChEBI" id="CHEBI:59789"/>
    </ligand>
</feature>
<dbReference type="EC" id="2.1.1.-" evidence="1"/>
<dbReference type="EC" id="2.1.1.35" evidence="1"/>
<dbReference type="EMBL" id="FM209186">
    <property type="protein sequence ID" value="CAW29859.1"/>
    <property type="molecule type" value="Genomic_DNA"/>
</dbReference>
<dbReference type="RefSeq" id="WP_003116071.1">
    <property type="nucleotide sequence ID" value="NC_011770.1"/>
</dbReference>
<dbReference type="SMR" id="B7V1D2"/>
<dbReference type="KEGG" id="pag:PLES_51051"/>
<dbReference type="HOGENOM" id="CLU_043022_0_0_6"/>
<dbReference type="GO" id="GO:0005829">
    <property type="term" value="C:cytosol"/>
    <property type="evidence" value="ECO:0007669"/>
    <property type="project" value="TreeGrafter"/>
</dbReference>
<dbReference type="GO" id="GO:0019843">
    <property type="term" value="F:rRNA binding"/>
    <property type="evidence" value="ECO:0007669"/>
    <property type="project" value="TreeGrafter"/>
</dbReference>
<dbReference type="GO" id="GO:0030697">
    <property type="term" value="F:tRNA (uracil(54)-C5)-methyltransferase activity, S-adenosyl methionine-dependent"/>
    <property type="evidence" value="ECO:0007669"/>
    <property type="project" value="UniProtKB-UniRule"/>
</dbReference>
<dbReference type="GO" id="GO:0000049">
    <property type="term" value="F:tRNA binding"/>
    <property type="evidence" value="ECO:0007669"/>
    <property type="project" value="TreeGrafter"/>
</dbReference>
<dbReference type="GO" id="GO:0030488">
    <property type="term" value="P:tRNA methylation"/>
    <property type="evidence" value="ECO:0007669"/>
    <property type="project" value="UniProtKB-UniRule"/>
</dbReference>
<dbReference type="CDD" id="cd02440">
    <property type="entry name" value="AdoMet_MTases"/>
    <property type="match status" value="1"/>
</dbReference>
<dbReference type="FunFam" id="2.40.50.1070:FF:000001">
    <property type="entry name" value="tRNA/tmRNA (uracil-C(5))-methyltransferase"/>
    <property type="match status" value="1"/>
</dbReference>
<dbReference type="FunFam" id="3.40.50.150:FF:000012">
    <property type="entry name" value="tRNA/tmRNA (uracil-C(5))-methyltransferase"/>
    <property type="match status" value="1"/>
</dbReference>
<dbReference type="Gene3D" id="2.40.50.1070">
    <property type="match status" value="1"/>
</dbReference>
<dbReference type="Gene3D" id="3.40.50.150">
    <property type="entry name" value="Vaccinia Virus protein VP39"/>
    <property type="match status" value="1"/>
</dbReference>
<dbReference type="HAMAP" id="MF_01011">
    <property type="entry name" value="RNA_methyltr_TrmA"/>
    <property type="match status" value="1"/>
</dbReference>
<dbReference type="InterPro" id="IPR030390">
    <property type="entry name" value="MeTrfase_TrmA_AS"/>
</dbReference>
<dbReference type="InterPro" id="IPR030391">
    <property type="entry name" value="MeTrfase_TrmA_CS"/>
</dbReference>
<dbReference type="InterPro" id="IPR029063">
    <property type="entry name" value="SAM-dependent_MTases_sf"/>
</dbReference>
<dbReference type="InterPro" id="IPR011869">
    <property type="entry name" value="TrmA_MeTrfase"/>
</dbReference>
<dbReference type="InterPro" id="IPR010280">
    <property type="entry name" value="U5_MeTrfase_fam"/>
</dbReference>
<dbReference type="NCBIfam" id="TIGR02143">
    <property type="entry name" value="trmA_only"/>
    <property type="match status" value="1"/>
</dbReference>
<dbReference type="PANTHER" id="PTHR47790">
    <property type="entry name" value="TRNA/TMRNA (URACIL-C(5))-METHYLTRANSFERASE"/>
    <property type="match status" value="1"/>
</dbReference>
<dbReference type="PANTHER" id="PTHR47790:SF2">
    <property type="entry name" value="TRNA_TMRNA (URACIL-C(5))-METHYLTRANSFERASE"/>
    <property type="match status" value="1"/>
</dbReference>
<dbReference type="Pfam" id="PF05958">
    <property type="entry name" value="tRNA_U5-meth_tr"/>
    <property type="match status" value="1"/>
</dbReference>
<dbReference type="SUPFAM" id="SSF53335">
    <property type="entry name" value="S-adenosyl-L-methionine-dependent methyltransferases"/>
    <property type="match status" value="1"/>
</dbReference>
<dbReference type="PROSITE" id="PS51687">
    <property type="entry name" value="SAM_MT_RNA_M5U"/>
    <property type="match status" value="1"/>
</dbReference>
<dbReference type="PROSITE" id="PS01230">
    <property type="entry name" value="TRMA_1"/>
    <property type="match status" value="1"/>
</dbReference>
<dbReference type="PROSITE" id="PS01231">
    <property type="entry name" value="TRMA_2"/>
    <property type="match status" value="1"/>
</dbReference>
<keyword id="KW-0489">Methyltransferase</keyword>
<keyword id="KW-0949">S-adenosyl-L-methionine</keyword>
<keyword id="KW-0808">Transferase</keyword>
<keyword id="KW-0819">tRNA processing</keyword>
<reference key="1">
    <citation type="journal article" date="2009" name="Genome Res.">
        <title>Newly introduced genomic prophage islands are critical determinants of in vivo competitiveness in the Liverpool epidemic strain of Pseudomonas aeruginosa.</title>
        <authorList>
            <person name="Winstanley C."/>
            <person name="Langille M.G.I."/>
            <person name="Fothergill J.L."/>
            <person name="Kukavica-Ibrulj I."/>
            <person name="Paradis-Bleau C."/>
            <person name="Sanschagrin F."/>
            <person name="Thomson N.R."/>
            <person name="Winsor G.L."/>
            <person name="Quail M.A."/>
            <person name="Lennard N."/>
            <person name="Bignell A."/>
            <person name="Clarke L."/>
            <person name="Seeger K."/>
            <person name="Saunders D."/>
            <person name="Harris D."/>
            <person name="Parkhill J."/>
            <person name="Hancock R.E.W."/>
            <person name="Brinkman F.S.L."/>
            <person name="Levesque R.C."/>
        </authorList>
    </citation>
    <scope>NUCLEOTIDE SEQUENCE [LARGE SCALE GENOMIC DNA]</scope>
    <source>
        <strain>LESB58</strain>
    </source>
</reference>
<sequence length="363" mass="41207">MSRPQFDPSAYAAQLEDKKSRLAGLLAPFAAPAPEVFESPREHYRLRAEFRLWRETGNEKRHYAMFEQGDKHTPILIEDFPIASRRINELMPRLKAAWADPALGFKLFQVEFLTTLAGDALITLCYHRPIDDAWRQAAEKLAAELGVNLVGRSRGKRIVVGRDYVEEELSVAGRRFRYRQPEGAFTQPNGEVNQKMLGWAYEALGQRDDDLLELYCGNGNFTLPLATRVRKVLATEISKSSVNAALANLADNAVDNVSLVRLSAEELTQALNEVRPFRRLADIDLKSYAFGSVFVDPPRAGMDPDTCELARRFERILYISCNPETLAQNIAQLHDTHRISRCALFDQFPYTHHMESGVLLERR</sequence>
<evidence type="ECO:0000255" key="1">
    <source>
        <dbReference type="HAMAP-Rule" id="MF_01011"/>
    </source>
</evidence>
<organism>
    <name type="scientific">Pseudomonas aeruginosa (strain LESB58)</name>
    <dbReference type="NCBI Taxonomy" id="557722"/>
    <lineage>
        <taxon>Bacteria</taxon>
        <taxon>Pseudomonadati</taxon>
        <taxon>Pseudomonadota</taxon>
        <taxon>Gammaproteobacteria</taxon>
        <taxon>Pseudomonadales</taxon>
        <taxon>Pseudomonadaceae</taxon>
        <taxon>Pseudomonas</taxon>
    </lineage>
</organism>